<comment type="function">
    <text evidence="1">One of several proteins that assist in the late maturation steps of the functional core of the 30S ribosomal subunit. Helps release RbfA from mature subunits. May play a role in the assembly of ribosomal proteins into the subunit. Circularly permuted GTPase that catalyzes slow GTP hydrolysis, GTPase activity is stimulated by the 30S ribosomal subunit.</text>
</comment>
<comment type="cofactor">
    <cofactor evidence="1">
        <name>Zn(2+)</name>
        <dbReference type="ChEBI" id="CHEBI:29105"/>
    </cofactor>
    <text evidence="1">Binds 1 zinc ion per subunit.</text>
</comment>
<comment type="subunit">
    <text evidence="1">Monomer. Associates with 30S ribosomal subunit, binds 16S rRNA.</text>
</comment>
<comment type="subcellular location">
    <subcellularLocation>
        <location evidence="1">Cytoplasm</location>
    </subcellularLocation>
</comment>
<comment type="similarity">
    <text evidence="1">Belongs to the TRAFAC class YlqF/YawG GTPase family. RsgA subfamily.</text>
</comment>
<reference key="1">
    <citation type="journal article" date="2002" name="Nucleic Acids Res.">
        <title>The complete genomic sequence of Mycoplasma penetrans, an intracellular bacterial pathogen in humans.</title>
        <authorList>
            <person name="Sasaki Y."/>
            <person name="Ishikawa J."/>
            <person name="Yamashita A."/>
            <person name="Oshima K."/>
            <person name="Kenri T."/>
            <person name="Furuya K."/>
            <person name="Yoshino C."/>
            <person name="Horino A."/>
            <person name="Shiba T."/>
            <person name="Sasaki T."/>
            <person name="Hattori M."/>
        </authorList>
    </citation>
    <scope>NUCLEOTIDE SEQUENCE [LARGE SCALE GENOMIC DNA]</scope>
    <source>
        <strain>HF-2</strain>
    </source>
</reference>
<sequence>MNAKILFKIANSFLLYDLSTKSQFNAVIRKKLKQEDRIITVGDNVEFVKDQYEYVIEKIDERKNLLIRPKVANIDTLIIVNSVKEPDFSSYGLNKFLAFYEARNINNVIIYFSKMDLLNKQESKNMNQIISQYEQNGYIVLNSLDKEKNKEKILNMIKNNVVCFAGQSGVGKSTLINFLIPDLELRTQEISQALNRGKHTTTSSLMIPFNEGFVIDTPGFGSLDLNMTQLELANSFTDFRNNSVHCKFKNCLHTNEQNCFIKKMVDENKIYKQRYLDYLKMFSEIKK</sequence>
<organism>
    <name type="scientific">Malacoplasma penetrans (strain HF-2)</name>
    <name type="common">Mycoplasma penetrans</name>
    <dbReference type="NCBI Taxonomy" id="272633"/>
    <lineage>
        <taxon>Bacteria</taxon>
        <taxon>Bacillati</taxon>
        <taxon>Mycoplasmatota</taxon>
        <taxon>Mycoplasmoidales</taxon>
        <taxon>Mycoplasmoidaceae</taxon>
        <taxon>Malacoplasma</taxon>
    </lineage>
</organism>
<proteinExistence type="inferred from homology"/>
<gene>
    <name evidence="1" type="primary">rsgA</name>
    <name type="ordered locus">MYPE9050</name>
</gene>
<accession>Q8EUL6</accession>
<name>RSGA_MALP2</name>
<keyword id="KW-0963">Cytoplasm</keyword>
<keyword id="KW-0342">GTP-binding</keyword>
<keyword id="KW-0378">Hydrolase</keyword>
<keyword id="KW-0479">Metal-binding</keyword>
<keyword id="KW-0547">Nucleotide-binding</keyword>
<keyword id="KW-1185">Reference proteome</keyword>
<keyword id="KW-0690">Ribosome biogenesis</keyword>
<keyword id="KW-0694">RNA-binding</keyword>
<keyword id="KW-0699">rRNA-binding</keyword>
<keyword id="KW-0862">Zinc</keyword>
<dbReference type="EC" id="3.6.1.-" evidence="1"/>
<dbReference type="EMBL" id="BA000026">
    <property type="protein sequence ID" value="BAC44696.1"/>
    <property type="molecule type" value="Genomic_DNA"/>
</dbReference>
<dbReference type="RefSeq" id="WP_011077725.1">
    <property type="nucleotide sequence ID" value="NC_004432.1"/>
</dbReference>
<dbReference type="SMR" id="Q8EUL6"/>
<dbReference type="FunCoup" id="Q8EUL6">
    <property type="interactions" value="148"/>
</dbReference>
<dbReference type="STRING" id="272633.gene:10732027"/>
<dbReference type="KEGG" id="mpe:MYPE9050"/>
<dbReference type="eggNOG" id="COG1162">
    <property type="taxonomic scope" value="Bacteria"/>
</dbReference>
<dbReference type="HOGENOM" id="CLU_033617_2_1_14"/>
<dbReference type="InParanoid" id="Q8EUL6"/>
<dbReference type="Proteomes" id="UP000002522">
    <property type="component" value="Chromosome"/>
</dbReference>
<dbReference type="GO" id="GO:0005737">
    <property type="term" value="C:cytoplasm"/>
    <property type="evidence" value="ECO:0007669"/>
    <property type="project" value="UniProtKB-SubCell"/>
</dbReference>
<dbReference type="GO" id="GO:0005525">
    <property type="term" value="F:GTP binding"/>
    <property type="evidence" value="ECO:0007669"/>
    <property type="project" value="UniProtKB-UniRule"/>
</dbReference>
<dbReference type="GO" id="GO:0003924">
    <property type="term" value="F:GTPase activity"/>
    <property type="evidence" value="ECO:0007669"/>
    <property type="project" value="UniProtKB-UniRule"/>
</dbReference>
<dbReference type="GO" id="GO:0046872">
    <property type="term" value="F:metal ion binding"/>
    <property type="evidence" value="ECO:0007669"/>
    <property type="project" value="UniProtKB-KW"/>
</dbReference>
<dbReference type="GO" id="GO:0019843">
    <property type="term" value="F:rRNA binding"/>
    <property type="evidence" value="ECO:0007669"/>
    <property type="project" value="UniProtKB-KW"/>
</dbReference>
<dbReference type="GO" id="GO:0042274">
    <property type="term" value="P:ribosomal small subunit biogenesis"/>
    <property type="evidence" value="ECO:0007669"/>
    <property type="project" value="UniProtKB-UniRule"/>
</dbReference>
<dbReference type="CDD" id="cd01854">
    <property type="entry name" value="YjeQ_EngC"/>
    <property type="match status" value="1"/>
</dbReference>
<dbReference type="Gene3D" id="3.40.50.300">
    <property type="entry name" value="P-loop containing nucleotide triphosphate hydrolases"/>
    <property type="match status" value="1"/>
</dbReference>
<dbReference type="Gene3D" id="1.10.40.50">
    <property type="entry name" value="Probable gtpase engc, domain 3"/>
    <property type="match status" value="1"/>
</dbReference>
<dbReference type="HAMAP" id="MF_01820">
    <property type="entry name" value="GTPase_RsgA"/>
    <property type="match status" value="1"/>
</dbReference>
<dbReference type="InterPro" id="IPR030378">
    <property type="entry name" value="G_CP_dom"/>
</dbReference>
<dbReference type="InterPro" id="IPR027417">
    <property type="entry name" value="P-loop_NTPase"/>
</dbReference>
<dbReference type="InterPro" id="IPR004881">
    <property type="entry name" value="Ribosome_biogen_GTPase_RsgA"/>
</dbReference>
<dbReference type="InterPro" id="IPR010914">
    <property type="entry name" value="RsgA_GTPase_dom"/>
</dbReference>
<dbReference type="NCBIfam" id="TIGR00157">
    <property type="entry name" value="ribosome small subunit-dependent GTPase A"/>
    <property type="match status" value="1"/>
</dbReference>
<dbReference type="PANTHER" id="PTHR32120">
    <property type="entry name" value="SMALL RIBOSOMAL SUBUNIT BIOGENESIS GTPASE RSGA"/>
    <property type="match status" value="1"/>
</dbReference>
<dbReference type="PANTHER" id="PTHR32120:SF11">
    <property type="entry name" value="SMALL RIBOSOMAL SUBUNIT BIOGENESIS GTPASE RSGA 1, MITOCHONDRIAL-RELATED"/>
    <property type="match status" value="1"/>
</dbReference>
<dbReference type="Pfam" id="PF03193">
    <property type="entry name" value="RsgA_GTPase"/>
    <property type="match status" value="1"/>
</dbReference>
<dbReference type="SUPFAM" id="SSF52540">
    <property type="entry name" value="P-loop containing nucleoside triphosphate hydrolases"/>
    <property type="match status" value="1"/>
</dbReference>
<dbReference type="PROSITE" id="PS50936">
    <property type="entry name" value="ENGC_GTPASE"/>
    <property type="match status" value="1"/>
</dbReference>
<dbReference type="PROSITE" id="PS51721">
    <property type="entry name" value="G_CP"/>
    <property type="match status" value="1"/>
</dbReference>
<evidence type="ECO:0000255" key="1">
    <source>
        <dbReference type="HAMAP-Rule" id="MF_01820"/>
    </source>
</evidence>
<evidence type="ECO:0000255" key="2">
    <source>
        <dbReference type="PROSITE-ProRule" id="PRU01058"/>
    </source>
</evidence>
<protein>
    <recommendedName>
        <fullName evidence="1">Small ribosomal subunit biogenesis GTPase RsgA</fullName>
        <ecNumber evidence="1">3.6.1.-</ecNumber>
    </recommendedName>
</protein>
<feature type="chain" id="PRO_0000171495" description="Small ribosomal subunit biogenesis GTPase RsgA">
    <location>
        <begin position="1"/>
        <end position="287"/>
    </location>
</feature>
<feature type="domain" description="CP-type G" evidence="2">
    <location>
        <begin position="63"/>
        <end position="223"/>
    </location>
</feature>
<feature type="binding site" evidence="1">
    <location>
        <begin position="113"/>
        <end position="116"/>
    </location>
    <ligand>
        <name>GTP</name>
        <dbReference type="ChEBI" id="CHEBI:37565"/>
    </ligand>
</feature>
<feature type="binding site" evidence="1">
    <location>
        <begin position="166"/>
        <end position="174"/>
    </location>
    <ligand>
        <name>GTP</name>
        <dbReference type="ChEBI" id="CHEBI:37565"/>
    </ligand>
</feature>
<feature type="binding site" evidence="1">
    <location>
        <position position="246"/>
    </location>
    <ligand>
        <name>Zn(2+)</name>
        <dbReference type="ChEBI" id="CHEBI:29105"/>
    </ligand>
</feature>
<feature type="binding site" evidence="1">
    <location>
        <position position="251"/>
    </location>
    <ligand>
        <name>Zn(2+)</name>
        <dbReference type="ChEBI" id="CHEBI:29105"/>
    </ligand>
</feature>
<feature type="binding site" evidence="1">
    <location>
        <position position="253"/>
    </location>
    <ligand>
        <name>Zn(2+)</name>
        <dbReference type="ChEBI" id="CHEBI:29105"/>
    </ligand>
</feature>
<feature type="binding site" evidence="1">
    <location>
        <position position="259"/>
    </location>
    <ligand>
        <name>Zn(2+)</name>
        <dbReference type="ChEBI" id="CHEBI:29105"/>
    </ligand>
</feature>